<protein>
    <recommendedName>
        <fullName evidence="2">Enolase</fullName>
        <ecNumber evidence="2">4.2.1.11</ecNumber>
    </recommendedName>
    <alternativeName>
        <fullName evidence="2">2-phospho-D-glycerate hydro-lyase</fullName>
    </alternativeName>
    <alternativeName>
        <fullName evidence="2">2-phosphoglycerate dehydratase</fullName>
    </alternativeName>
</protein>
<name>ENO_SODGM</name>
<proteinExistence type="inferred from homology"/>
<evidence type="ECO:0000250" key="1"/>
<evidence type="ECO:0000255" key="2">
    <source>
        <dbReference type="HAMAP-Rule" id="MF_00318"/>
    </source>
</evidence>
<keyword id="KW-0963">Cytoplasm</keyword>
<keyword id="KW-0324">Glycolysis</keyword>
<keyword id="KW-0456">Lyase</keyword>
<keyword id="KW-0460">Magnesium</keyword>
<keyword id="KW-0479">Metal-binding</keyword>
<keyword id="KW-0964">Secreted</keyword>
<feature type="initiator methionine" description="Removed" evidence="1">
    <location>
        <position position="1"/>
    </location>
</feature>
<feature type="chain" id="PRO_0000267108" description="Enolase">
    <location>
        <begin position="2"/>
        <end position="433"/>
    </location>
</feature>
<feature type="active site" description="Proton donor" evidence="2">
    <location>
        <position position="209"/>
    </location>
</feature>
<feature type="active site" description="Proton acceptor" evidence="2">
    <location>
        <position position="343"/>
    </location>
</feature>
<feature type="binding site" evidence="2">
    <location>
        <position position="167"/>
    </location>
    <ligand>
        <name>(2R)-2-phosphoglycerate</name>
        <dbReference type="ChEBI" id="CHEBI:58289"/>
    </ligand>
</feature>
<feature type="binding site" evidence="2">
    <location>
        <position position="246"/>
    </location>
    <ligand>
        <name>Mg(2+)</name>
        <dbReference type="ChEBI" id="CHEBI:18420"/>
    </ligand>
</feature>
<feature type="binding site" evidence="2">
    <location>
        <position position="291"/>
    </location>
    <ligand>
        <name>Mg(2+)</name>
        <dbReference type="ChEBI" id="CHEBI:18420"/>
    </ligand>
</feature>
<feature type="binding site" evidence="2">
    <location>
        <position position="318"/>
    </location>
    <ligand>
        <name>Mg(2+)</name>
        <dbReference type="ChEBI" id="CHEBI:18420"/>
    </ligand>
</feature>
<feature type="binding site" evidence="2">
    <location>
        <position position="343"/>
    </location>
    <ligand>
        <name>(2R)-2-phosphoglycerate</name>
        <dbReference type="ChEBI" id="CHEBI:58289"/>
    </ligand>
</feature>
<feature type="binding site" evidence="2">
    <location>
        <position position="372"/>
    </location>
    <ligand>
        <name>(2R)-2-phosphoglycerate</name>
        <dbReference type="ChEBI" id="CHEBI:58289"/>
    </ligand>
</feature>
<feature type="binding site" evidence="2">
    <location>
        <position position="373"/>
    </location>
    <ligand>
        <name>(2R)-2-phosphoglycerate</name>
        <dbReference type="ChEBI" id="CHEBI:58289"/>
    </ligand>
</feature>
<feature type="binding site" evidence="2">
    <location>
        <position position="394"/>
    </location>
    <ligand>
        <name>(2R)-2-phosphoglycerate</name>
        <dbReference type="ChEBI" id="CHEBI:58289"/>
    </ligand>
</feature>
<sequence length="433" mass="45832">MSKIVKVIGREIIDSRGNPTVEAEVHLEGGFVGLAAAPSGASTGSREALELRDGDKSRFLGKGVTKAVDAVNGPIAQALTCKDAKDQAALDKTMIDLDGTENKSKFGANAILAVSLAAAKAASASKGMPLYEHIAELNGTAGKFSMPLPMMNIINGGEHADNNVDIQEFMIQPVGAKSIKEAVRMGSEVFHNLAKVLKSKGMNTAVGDEGGYAPNLESNAAALAAIKEAVEKAGYMLGKDITLAMDCAASEFFGEATGNYNLKGEGKTFTSQEFTHYLEDLTKQYPIVSIEDGLNESDWDGFAYQTKVLGDKIQLVGDDLFVTNTKILKEGIEKGIANSILIKFNQIGSLTETLAAIKMAKDAGYTTIISHRSGETEDATIADLAVGTAAGQIKTGSMSRSDRVAKYNQLIRIEEALGDRAPFNGLREVKGQA</sequence>
<dbReference type="EC" id="4.2.1.11" evidence="2"/>
<dbReference type="EMBL" id="AP008232">
    <property type="protein sequence ID" value="BAE73788.1"/>
    <property type="molecule type" value="Genomic_DNA"/>
</dbReference>
<dbReference type="RefSeq" id="WP_011410486.1">
    <property type="nucleotide sequence ID" value="NC_007712.1"/>
</dbReference>
<dbReference type="SMR" id="Q2NVN7"/>
<dbReference type="STRING" id="343509.SG0513"/>
<dbReference type="KEGG" id="sgl:SG0513"/>
<dbReference type="eggNOG" id="COG0148">
    <property type="taxonomic scope" value="Bacteria"/>
</dbReference>
<dbReference type="HOGENOM" id="CLU_031223_2_1_6"/>
<dbReference type="OrthoDB" id="9804716at2"/>
<dbReference type="BioCyc" id="SGLO343509:SGP1_RS04580-MONOMER"/>
<dbReference type="UniPathway" id="UPA00109">
    <property type="reaction ID" value="UER00187"/>
</dbReference>
<dbReference type="Proteomes" id="UP000001932">
    <property type="component" value="Chromosome"/>
</dbReference>
<dbReference type="GO" id="GO:0009986">
    <property type="term" value="C:cell surface"/>
    <property type="evidence" value="ECO:0007669"/>
    <property type="project" value="UniProtKB-SubCell"/>
</dbReference>
<dbReference type="GO" id="GO:0005576">
    <property type="term" value="C:extracellular region"/>
    <property type="evidence" value="ECO:0007669"/>
    <property type="project" value="UniProtKB-SubCell"/>
</dbReference>
<dbReference type="GO" id="GO:0000015">
    <property type="term" value="C:phosphopyruvate hydratase complex"/>
    <property type="evidence" value="ECO:0007669"/>
    <property type="project" value="InterPro"/>
</dbReference>
<dbReference type="GO" id="GO:0000287">
    <property type="term" value="F:magnesium ion binding"/>
    <property type="evidence" value="ECO:0007669"/>
    <property type="project" value="UniProtKB-UniRule"/>
</dbReference>
<dbReference type="GO" id="GO:0004634">
    <property type="term" value="F:phosphopyruvate hydratase activity"/>
    <property type="evidence" value="ECO:0007669"/>
    <property type="project" value="UniProtKB-UniRule"/>
</dbReference>
<dbReference type="GO" id="GO:0006096">
    <property type="term" value="P:glycolytic process"/>
    <property type="evidence" value="ECO:0007669"/>
    <property type="project" value="UniProtKB-UniRule"/>
</dbReference>
<dbReference type="CDD" id="cd03313">
    <property type="entry name" value="enolase"/>
    <property type="match status" value="1"/>
</dbReference>
<dbReference type="FunFam" id="3.20.20.120:FF:000001">
    <property type="entry name" value="Enolase"/>
    <property type="match status" value="1"/>
</dbReference>
<dbReference type="FunFam" id="3.30.390.10:FF:000001">
    <property type="entry name" value="Enolase"/>
    <property type="match status" value="1"/>
</dbReference>
<dbReference type="Gene3D" id="3.20.20.120">
    <property type="entry name" value="Enolase-like C-terminal domain"/>
    <property type="match status" value="1"/>
</dbReference>
<dbReference type="Gene3D" id="3.30.390.10">
    <property type="entry name" value="Enolase-like, N-terminal domain"/>
    <property type="match status" value="1"/>
</dbReference>
<dbReference type="HAMAP" id="MF_00318">
    <property type="entry name" value="Enolase"/>
    <property type="match status" value="1"/>
</dbReference>
<dbReference type="InterPro" id="IPR000941">
    <property type="entry name" value="Enolase"/>
</dbReference>
<dbReference type="InterPro" id="IPR036849">
    <property type="entry name" value="Enolase-like_C_sf"/>
</dbReference>
<dbReference type="InterPro" id="IPR029017">
    <property type="entry name" value="Enolase-like_N"/>
</dbReference>
<dbReference type="InterPro" id="IPR020810">
    <property type="entry name" value="Enolase_C"/>
</dbReference>
<dbReference type="InterPro" id="IPR020809">
    <property type="entry name" value="Enolase_CS"/>
</dbReference>
<dbReference type="InterPro" id="IPR020811">
    <property type="entry name" value="Enolase_N"/>
</dbReference>
<dbReference type="NCBIfam" id="TIGR01060">
    <property type="entry name" value="eno"/>
    <property type="match status" value="1"/>
</dbReference>
<dbReference type="PANTHER" id="PTHR11902">
    <property type="entry name" value="ENOLASE"/>
    <property type="match status" value="1"/>
</dbReference>
<dbReference type="PANTHER" id="PTHR11902:SF1">
    <property type="entry name" value="ENOLASE"/>
    <property type="match status" value="1"/>
</dbReference>
<dbReference type="Pfam" id="PF00113">
    <property type="entry name" value="Enolase_C"/>
    <property type="match status" value="1"/>
</dbReference>
<dbReference type="Pfam" id="PF03952">
    <property type="entry name" value="Enolase_N"/>
    <property type="match status" value="1"/>
</dbReference>
<dbReference type="PIRSF" id="PIRSF001400">
    <property type="entry name" value="Enolase"/>
    <property type="match status" value="1"/>
</dbReference>
<dbReference type="PRINTS" id="PR00148">
    <property type="entry name" value="ENOLASE"/>
</dbReference>
<dbReference type="SFLD" id="SFLDF00002">
    <property type="entry name" value="enolase"/>
    <property type="match status" value="1"/>
</dbReference>
<dbReference type="SFLD" id="SFLDG00178">
    <property type="entry name" value="enolase"/>
    <property type="match status" value="1"/>
</dbReference>
<dbReference type="SMART" id="SM01192">
    <property type="entry name" value="Enolase_C"/>
    <property type="match status" value="1"/>
</dbReference>
<dbReference type="SMART" id="SM01193">
    <property type="entry name" value="Enolase_N"/>
    <property type="match status" value="1"/>
</dbReference>
<dbReference type="SUPFAM" id="SSF51604">
    <property type="entry name" value="Enolase C-terminal domain-like"/>
    <property type="match status" value="1"/>
</dbReference>
<dbReference type="SUPFAM" id="SSF54826">
    <property type="entry name" value="Enolase N-terminal domain-like"/>
    <property type="match status" value="1"/>
</dbReference>
<dbReference type="PROSITE" id="PS00164">
    <property type="entry name" value="ENOLASE"/>
    <property type="match status" value="1"/>
</dbReference>
<organism>
    <name type="scientific">Sodalis glossinidius (strain morsitans)</name>
    <dbReference type="NCBI Taxonomy" id="343509"/>
    <lineage>
        <taxon>Bacteria</taxon>
        <taxon>Pseudomonadati</taxon>
        <taxon>Pseudomonadota</taxon>
        <taxon>Gammaproteobacteria</taxon>
        <taxon>Enterobacterales</taxon>
        <taxon>Bruguierivoracaceae</taxon>
        <taxon>Sodalis</taxon>
    </lineage>
</organism>
<accession>Q2NVN7</accession>
<comment type="function">
    <text evidence="2">Catalyzes the reversible conversion of 2-phosphoglycerate (2-PG) into phosphoenolpyruvate (PEP). It is essential for the degradation of carbohydrates via glycolysis.</text>
</comment>
<comment type="catalytic activity">
    <reaction evidence="2">
        <text>(2R)-2-phosphoglycerate = phosphoenolpyruvate + H2O</text>
        <dbReference type="Rhea" id="RHEA:10164"/>
        <dbReference type="ChEBI" id="CHEBI:15377"/>
        <dbReference type="ChEBI" id="CHEBI:58289"/>
        <dbReference type="ChEBI" id="CHEBI:58702"/>
        <dbReference type="EC" id="4.2.1.11"/>
    </reaction>
</comment>
<comment type="cofactor">
    <cofactor evidence="2">
        <name>Mg(2+)</name>
        <dbReference type="ChEBI" id="CHEBI:18420"/>
    </cofactor>
    <text evidence="2">Binds a second Mg(2+) ion via substrate during catalysis.</text>
</comment>
<comment type="pathway">
    <text evidence="2">Carbohydrate degradation; glycolysis; pyruvate from D-glyceraldehyde 3-phosphate: step 4/5.</text>
</comment>
<comment type="subunit">
    <text evidence="2">Component of the RNA degradosome, a multiprotein complex involved in RNA processing and mRNA degradation.</text>
</comment>
<comment type="subcellular location">
    <subcellularLocation>
        <location evidence="2">Cytoplasm</location>
    </subcellularLocation>
    <subcellularLocation>
        <location evidence="2">Secreted</location>
    </subcellularLocation>
    <subcellularLocation>
        <location evidence="2">Cell surface</location>
    </subcellularLocation>
    <text evidence="2">Fractions of enolase are present in both the cytoplasm and on the cell surface.</text>
</comment>
<comment type="similarity">
    <text evidence="2">Belongs to the enolase family.</text>
</comment>
<gene>
    <name evidence="2" type="primary">eno</name>
    <name type="ordered locus">SG0513</name>
</gene>
<reference key="1">
    <citation type="journal article" date="2006" name="Genome Res.">
        <title>Massive genome erosion and functional adaptations provide insights into the symbiotic lifestyle of Sodalis glossinidius in the tsetse host.</title>
        <authorList>
            <person name="Toh H."/>
            <person name="Weiss B.L."/>
            <person name="Perkin S.A.H."/>
            <person name="Yamashita A."/>
            <person name="Oshima K."/>
            <person name="Hattori M."/>
            <person name="Aksoy S."/>
        </authorList>
    </citation>
    <scope>NUCLEOTIDE SEQUENCE [LARGE SCALE GENOMIC DNA]</scope>
    <source>
        <strain>morsitans</strain>
    </source>
</reference>